<name>RARB_MOUSE</name>
<accession>P22605</accession>
<accession>P11417</accession>
<accession>P22604</accession>
<organism>
    <name type="scientific">Mus musculus</name>
    <name type="common">Mouse</name>
    <dbReference type="NCBI Taxonomy" id="10090"/>
    <lineage>
        <taxon>Eukaryota</taxon>
        <taxon>Metazoa</taxon>
        <taxon>Chordata</taxon>
        <taxon>Craniata</taxon>
        <taxon>Vertebrata</taxon>
        <taxon>Euteleostomi</taxon>
        <taxon>Mammalia</taxon>
        <taxon>Eutheria</taxon>
        <taxon>Euarchontoglires</taxon>
        <taxon>Glires</taxon>
        <taxon>Rodentia</taxon>
        <taxon>Myomorpha</taxon>
        <taxon>Muroidea</taxon>
        <taxon>Muridae</taxon>
        <taxon>Murinae</taxon>
        <taxon>Mus</taxon>
        <taxon>Mus</taxon>
    </lineage>
</organism>
<sequence length="482" mass="53331">MSTSSHACPVPAVRGHMTHYPAAPYPLLFPPVIRGLSLPPLHGLHGHPPPSGCSTPSPASVGQACQRTTGGSQFAASTKWTPSLNAAIETQSTSSEELVPSPPSPLPPPRVYKPCFVCQDKSSGYHYGVSACEGCKGFFRRSIQKNMIYTCHRDKNCVINKVTRNRCQYCRLQKCFEVGMSKESVRNDRNKKKKEPSKQECTESYEMTAELDDLTEKIRKAHQETFPSLCQLGKYTTNSSADHRVRLDLGLWDKFSELATKCIIKIVEFAKRLPGFTGLTIADQITLLKAACLDILILRICTRYTPEQDTMTFSDGLTLNRTQMHNAGFGPLTDLVFTFANQLLPLEMDDTETGLLSAICLICGDRQDLEEPTKVDKLQEPLLEALKIYIRKRRPSKPHMFPKILMKITDLRSISAKGAERVITLKMEIPGSMPPLIQEMLENSEGHEPLTPSSSGNIAEHSPSVSPSSVENSGVSQSPLLQ</sequence>
<protein>
    <recommendedName>
        <fullName>Retinoic acid receptor beta</fullName>
        <shortName>RAR-beta</shortName>
    </recommendedName>
    <alternativeName>
        <fullName>Nuclear receptor subfamily 1 group B member 2</fullName>
    </alternativeName>
</protein>
<feature type="chain" id="PRO_0000053468" description="Retinoic acid receptor beta">
    <location>
        <begin position="1"/>
        <end position="482"/>
    </location>
</feature>
<feature type="domain" description="NR LBD" evidence="4">
    <location>
        <begin position="210"/>
        <end position="444"/>
    </location>
</feature>
<feature type="DNA-binding region" description="Nuclear receptor" evidence="3">
    <location>
        <begin position="115"/>
        <end position="180"/>
    </location>
</feature>
<feature type="zinc finger region" description="NR C4-type" evidence="3">
    <location>
        <begin position="115"/>
        <end position="135"/>
    </location>
</feature>
<feature type="zinc finger region" description="NR C4-type" evidence="3">
    <location>
        <begin position="151"/>
        <end position="175"/>
    </location>
</feature>
<feature type="region of interest" description="Modulating">
    <location>
        <begin position="1"/>
        <end position="114"/>
    </location>
</feature>
<feature type="region of interest" description="Hinge">
    <location>
        <begin position="181"/>
        <end position="209"/>
    </location>
</feature>
<feature type="region of interest" description="Disordered" evidence="5">
    <location>
        <begin position="443"/>
        <end position="482"/>
    </location>
</feature>
<feature type="compositionally biased region" description="Low complexity" evidence="5">
    <location>
        <begin position="462"/>
        <end position="482"/>
    </location>
</feature>
<feature type="modified residue" description="Phosphoserine" evidence="1">
    <location>
        <position position="104"/>
    </location>
</feature>
<feature type="splice variant" id="VSP_003636" description="In isoform Beta-2." evidence="8 9 10 11">
    <original>MSTSSHACPVPAVRGHMTHYPAAPYPLLFPPVIRGLSLPPLHGLHGHPPPSGCSTPSPASVGQACQRTTGGSQFAASTKWTPSLNAA</original>
    <variation>MFDCMDVLSVSPGQILDFYTASPSSCMLQEKALKACLSGFTQAEWQHRHTAQS</variation>
    <location>
        <begin position="1"/>
        <end position="87"/>
    </location>
</feature>
<feature type="splice variant" id="VSP_003637" description="In isoform Beta-4." evidence="7">
    <location>
        <begin position="1"/>
        <end position="83"/>
    </location>
</feature>
<feature type="splice variant" id="VSP_003639" description="In isoform Beta-1." evidence="9">
    <original>S</original>
    <variation>T</variation>
    <location>
        <position position="60"/>
    </location>
</feature>
<feature type="splice variant" id="VSP_003640" description="In isoform Beta-1." evidence="9">
    <location>
        <begin position="61"/>
        <end position="87"/>
    </location>
</feature>
<feature type="splice variant" id="VSP_003638" description="In isoform Beta-4." evidence="7">
    <original>LNA</original>
    <variation>MEN</variation>
    <location>
        <begin position="84"/>
        <end position="86"/>
    </location>
</feature>
<feature type="helix" evidence="13">
    <location>
        <begin position="212"/>
        <end position="225"/>
    </location>
</feature>
<feature type="strand" evidence="13">
    <location>
        <begin position="229"/>
        <end position="232"/>
    </location>
</feature>
<feature type="helix" evidence="13">
    <location>
        <begin position="249"/>
        <end position="271"/>
    </location>
</feature>
<feature type="turn" evidence="13">
    <location>
        <begin position="274"/>
        <end position="276"/>
    </location>
</feature>
<feature type="strand" evidence="13">
    <location>
        <begin position="277"/>
        <end position="279"/>
    </location>
</feature>
<feature type="helix" evidence="13">
    <location>
        <begin position="281"/>
        <end position="301"/>
    </location>
</feature>
<feature type="turn" evidence="13">
    <location>
        <begin position="306"/>
        <end position="309"/>
    </location>
</feature>
<feature type="strand" evidence="13">
    <location>
        <begin position="310"/>
        <end position="312"/>
    </location>
</feature>
<feature type="strand" evidence="13">
    <location>
        <begin position="317"/>
        <end position="320"/>
    </location>
</feature>
<feature type="helix" evidence="13">
    <location>
        <begin position="321"/>
        <end position="326"/>
    </location>
</feature>
<feature type="turn" evidence="13">
    <location>
        <begin position="327"/>
        <end position="329"/>
    </location>
</feature>
<feature type="helix" evidence="13">
    <location>
        <begin position="330"/>
        <end position="332"/>
    </location>
</feature>
<feature type="helix" evidence="13">
    <location>
        <begin position="333"/>
        <end position="343"/>
    </location>
</feature>
<feature type="helix" evidence="13">
    <location>
        <begin position="344"/>
        <end position="346"/>
    </location>
</feature>
<feature type="helix" evidence="13">
    <location>
        <begin position="350"/>
        <end position="361"/>
    </location>
</feature>
<feature type="strand" evidence="13">
    <location>
        <begin position="366"/>
        <end position="368"/>
    </location>
</feature>
<feature type="helix" evidence="13">
    <location>
        <begin position="372"/>
        <end position="378"/>
    </location>
</feature>
<feature type="helix" evidence="13">
    <location>
        <begin position="380"/>
        <end position="393"/>
    </location>
</feature>
<feature type="helix" evidence="13">
    <location>
        <begin position="400"/>
        <end position="405"/>
    </location>
</feature>
<feature type="helix" evidence="13">
    <location>
        <begin position="407"/>
        <end position="425"/>
    </location>
</feature>
<feature type="turn" evidence="13">
    <location>
        <begin position="426"/>
        <end position="428"/>
    </location>
</feature>
<feature type="helix" evidence="13">
    <location>
        <begin position="435"/>
        <end position="441"/>
    </location>
</feature>
<keyword id="KW-0002">3D-structure</keyword>
<keyword id="KW-0025">Alternative splicing</keyword>
<keyword id="KW-0963">Cytoplasm</keyword>
<keyword id="KW-0238">DNA-binding</keyword>
<keyword id="KW-0479">Metal-binding</keyword>
<keyword id="KW-0539">Nucleus</keyword>
<keyword id="KW-0597">Phosphoprotein</keyword>
<keyword id="KW-0675">Receptor</keyword>
<keyword id="KW-1185">Reference proteome</keyword>
<keyword id="KW-0804">Transcription</keyword>
<keyword id="KW-0805">Transcription regulation</keyword>
<keyword id="KW-0862">Zinc</keyword>
<keyword id="KW-0863">Zinc-finger</keyword>
<gene>
    <name type="primary">Rarb</name>
    <name type="synonym">Nr1b2</name>
</gene>
<proteinExistence type="evidence at protein level"/>
<dbReference type="EMBL" id="X56574">
    <property type="protein sequence ID" value="CAA39921.1"/>
    <property type="molecule type" value="mRNA"/>
</dbReference>
<dbReference type="EMBL" id="X56569">
    <property type="protein sequence ID" value="CAA39918.1"/>
    <property type="molecule type" value="mRNA"/>
</dbReference>
<dbReference type="EMBL" id="X56573">
    <property type="protein sequence ID" value="CAA39920.1"/>
    <property type="molecule type" value="mRNA"/>
</dbReference>
<dbReference type="EMBL" id="S56660">
    <property type="protein sequence ID" value="AAB25784.2"/>
    <property type="molecule type" value="mRNA"/>
</dbReference>
<dbReference type="EMBL" id="S92180">
    <property type="status" value="NOT_ANNOTATED_CDS"/>
    <property type="molecule type" value="mRNA"/>
</dbReference>
<dbReference type="CCDS" id="CCDS26834.1">
    <molecule id="P22605-3"/>
</dbReference>
<dbReference type="PIR" id="S05051">
    <property type="entry name" value="S05051"/>
</dbReference>
<dbReference type="RefSeq" id="NP_001276689.1">
    <molecule id="P22605-1"/>
    <property type="nucleotide sequence ID" value="NM_001289760.1"/>
</dbReference>
<dbReference type="RefSeq" id="NP_001276690.1">
    <molecule id="P22605-2"/>
    <property type="nucleotide sequence ID" value="NM_001289761.1"/>
</dbReference>
<dbReference type="RefSeq" id="NP_001276691.1">
    <molecule id="P22605-4"/>
    <property type="nucleotide sequence ID" value="NM_001289762.1"/>
</dbReference>
<dbReference type="RefSeq" id="NP_035373.1">
    <molecule id="P22605-3"/>
    <property type="nucleotide sequence ID" value="NM_011243.2"/>
</dbReference>
<dbReference type="PDB" id="1XDK">
    <property type="method" value="X-ray"/>
    <property type="resolution" value="2.90 A"/>
    <property type="chains" value="B/F=180-482"/>
</dbReference>
<dbReference type="PDBsum" id="1XDK"/>
<dbReference type="SMR" id="P22605"/>
<dbReference type="BioGRID" id="230063">
    <property type="interactions" value="3"/>
</dbReference>
<dbReference type="FunCoup" id="P22605">
    <property type="interactions" value="2090"/>
</dbReference>
<dbReference type="IntAct" id="P22605">
    <property type="interactions" value="4"/>
</dbReference>
<dbReference type="MINT" id="P22605"/>
<dbReference type="STRING" id="10090.ENSMUSP00000067694"/>
<dbReference type="BindingDB" id="P22605"/>
<dbReference type="ChEMBL" id="CHEMBL3266"/>
<dbReference type="DrugCentral" id="P22605"/>
<dbReference type="GuidetoPHARMACOLOGY" id="591"/>
<dbReference type="iPTMnet" id="P22605"/>
<dbReference type="PhosphoSitePlus" id="P22605"/>
<dbReference type="PaxDb" id="10090-ENSMUSP00000067694"/>
<dbReference type="ProteomicsDB" id="255096">
    <molecule id="P22605-1"/>
</dbReference>
<dbReference type="ProteomicsDB" id="255097">
    <molecule id="P22605-2"/>
</dbReference>
<dbReference type="ProteomicsDB" id="255098">
    <molecule id="P22605-3"/>
</dbReference>
<dbReference type="ProteomicsDB" id="255099">
    <molecule id="P22605-4"/>
</dbReference>
<dbReference type="Antibodypedia" id="934">
    <property type="antibodies" value="517 antibodies from 43 providers"/>
</dbReference>
<dbReference type="DNASU" id="218772"/>
<dbReference type="Ensembl" id="ENSMUST00000063750.8">
    <molecule id="P22605-3"/>
    <property type="protein sequence ID" value="ENSMUSP00000067694.7"/>
    <property type="gene ID" value="ENSMUSG00000017491.10"/>
</dbReference>
<dbReference type="GeneID" id="218772"/>
<dbReference type="KEGG" id="mmu:218772"/>
<dbReference type="UCSC" id="uc007shh.2">
    <molecule id="P22605-4"/>
    <property type="organism name" value="mouse"/>
</dbReference>
<dbReference type="UCSC" id="uc007shi.2">
    <molecule id="P22605-2"/>
    <property type="organism name" value="mouse"/>
</dbReference>
<dbReference type="UCSC" id="uc007shj.2">
    <molecule id="P22605-1"/>
    <property type="organism name" value="mouse"/>
</dbReference>
<dbReference type="AGR" id="MGI:97857"/>
<dbReference type="CTD" id="5915"/>
<dbReference type="MGI" id="MGI:97857">
    <property type="gene designation" value="Rarb"/>
</dbReference>
<dbReference type="VEuPathDB" id="HostDB:ENSMUSG00000017491"/>
<dbReference type="eggNOG" id="KOG3575">
    <property type="taxonomic scope" value="Eukaryota"/>
</dbReference>
<dbReference type="GeneTree" id="ENSGT00940000156196"/>
<dbReference type="HOGENOM" id="CLU_007368_18_2_1"/>
<dbReference type="InParanoid" id="P22605"/>
<dbReference type="OMA" id="TDWQHRH"/>
<dbReference type="OrthoDB" id="6081310at2759"/>
<dbReference type="PhylomeDB" id="P22605"/>
<dbReference type="TreeFam" id="TF328382"/>
<dbReference type="Reactome" id="R-MMU-383280">
    <property type="pathway name" value="Nuclear Receptor transcription pathway"/>
</dbReference>
<dbReference type="Reactome" id="R-MMU-5362517">
    <property type="pathway name" value="Signaling by Retinoic Acid"/>
</dbReference>
<dbReference type="BioGRID-ORCS" id="218772">
    <property type="hits" value="3 hits in 81 CRISPR screens"/>
</dbReference>
<dbReference type="ChiTaRS" id="Rarb">
    <property type="organism name" value="mouse"/>
</dbReference>
<dbReference type="EvolutionaryTrace" id="P22605"/>
<dbReference type="PRO" id="PR:P22605"/>
<dbReference type="Proteomes" id="UP000000589">
    <property type="component" value="Chromosome 14"/>
</dbReference>
<dbReference type="RNAct" id="P22605">
    <property type="molecule type" value="protein"/>
</dbReference>
<dbReference type="Bgee" id="ENSMUSG00000017491">
    <property type="expression patterns" value="Expressed in caudate-putamen and 264 other cell types or tissues"/>
</dbReference>
<dbReference type="ExpressionAtlas" id="P22605">
    <property type="expression patterns" value="baseline and differential"/>
</dbReference>
<dbReference type="GO" id="GO:0005737">
    <property type="term" value="C:cytoplasm"/>
    <property type="evidence" value="ECO:0007669"/>
    <property type="project" value="UniProtKB-SubCell"/>
</dbReference>
<dbReference type="GO" id="GO:0005654">
    <property type="term" value="C:nucleoplasm"/>
    <property type="evidence" value="ECO:0000304"/>
    <property type="project" value="Reactome"/>
</dbReference>
<dbReference type="GO" id="GO:0003700">
    <property type="term" value="F:DNA-binding transcription factor activity"/>
    <property type="evidence" value="ECO:0000314"/>
    <property type="project" value="MGI"/>
</dbReference>
<dbReference type="GO" id="GO:1901363">
    <property type="term" value="F:heterocyclic compound binding"/>
    <property type="evidence" value="ECO:0007669"/>
    <property type="project" value="Ensembl"/>
</dbReference>
<dbReference type="GO" id="GO:0004879">
    <property type="term" value="F:nuclear receptor activity"/>
    <property type="evidence" value="ECO:0007669"/>
    <property type="project" value="InterPro"/>
</dbReference>
<dbReference type="GO" id="GO:0046965">
    <property type="term" value="F:nuclear retinoid X receptor binding"/>
    <property type="evidence" value="ECO:0007669"/>
    <property type="project" value="Ensembl"/>
</dbReference>
<dbReference type="GO" id="GO:0044877">
    <property type="term" value="F:protein-containing complex binding"/>
    <property type="evidence" value="ECO:0007669"/>
    <property type="project" value="Ensembl"/>
</dbReference>
<dbReference type="GO" id="GO:0000977">
    <property type="term" value="F:RNA polymerase II transcription regulatory region sequence-specific DNA binding"/>
    <property type="evidence" value="ECO:0000314"/>
    <property type="project" value="MGI"/>
</dbReference>
<dbReference type="GO" id="GO:0043565">
    <property type="term" value="F:sequence-specific DNA binding"/>
    <property type="evidence" value="ECO:0000316"/>
    <property type="project" value="MGI"/>
</dbReference>
<dbReference type="GO" id="GO:1990837">
    <property type="term" value="F:sequence-specific double-stranded DNA binding"/>
    <property type="evidence" value="ECO:0007669"/>
    <property type="project" value="Ensembl"/>
</dbReference>
<dbReference type="GO" id="GO:0008270">
    <property type="term" value="F:zinc ion binding"/>
    <property type="evidence" value="ECO:0007669"/>
    <property type="project" value="UniProtKB-KW"/>
</dbReference>
<dbReference type="GO" id="GO:0006915">
    <property type="term" value="P:apoptotic process"/>
    <property type="evidence" value="ECO:0000316"/>
    <property type="project" value="MGI"/>
</dbReference>
<dbReference type="GO" id="GO:0060348">
    <property type="term" value="P:bone development"/>
    <property type="evidence" value="ECO:0000316"/>
    <property type="project" value="MGI"/>
</dbReference>
<dbReference type="GO" id="GO:0008283">
    <property type="term" value="P:cell population proliferation"/>
    <property type="evidence" value="ECO:0000316"/>
    <property type="project" value="MGI"/>
</dbReference>
<dbReference type="GO" id="GO:0048566">
    <property type="term" value="P:embryonic digestive tract development"/>
    <property type="evidence" value="ECO:0007669"/>
    <property type="project" value="Ensembl"/>
</dbReference>
<dbReference type="GO" id="GO:0048048">
    <property type="term" value="P:embryonic eye morphogenesis"/>
    <property type="evidence" value="ECO:0000316"/>
    <property type="project" value="MGI"/>
</dbReference>
<dbReference type="GO" id="GO:0035116">
    <property type="term" value="P:embryonic hindlimb morphogenesis"/>
    <property type="evidence" value="ECO:0000316"/>
    <property type="project" value="MGI"/>
</dbReference>
<dbReference type="GO" id="GO:0002068">
    <property type="term" value="P:glandular epithelial cell development"/>
    <property type="evidence" value="ECO:0000316"/>
    <property type="project" value="MGI"/>
</dbReference>
<dbReference type="GO" id="GO:0003417">
    <property type="term" value="P:growth plate cartilage development"/>
    <property type="evidence" value="ECO:0000316"/>
    <property type="project" value="MGI"/>
</dbReference>
<dbReference type="GO" id="GO:0035264">
    <property type="term" value="P:multicellular organism growth"/>
    <property type="evidence" value="ECO:0000316"/>
    <property type="project" value="MGI"/>
</dbReference>
<dbReference type="GO" id="GO:0043066">
    <property type="term" value="P:negative regulation of apoptotic process"/>
    <property type="evidence" value="ECO:0000316"/>
    <property type="project" value="MGI"/>
</dbReference>
<dbReference type="GO" id="GO:0061037">
    <property type="term" value="P:negative regulation of cartilage development"/>
    <property type="evidence" value="ECO:0000315"/>
    <property type="project" value="MGI"/>
</dbReference>
<dbReference type="GO" id="GO:0032331">
    <property type="term" value="P:negative regulation of chondrocyte differentiation"/>
    <property type="evidence" value="ECO:0000315"/>
    <property type="project" value="MGI"/>
</dbReference>
<dbReference type="GO" id="GO:2000647">
    <property type="term" value="P:negative regulation of stem cell proliferation"/>
    <property type="evidence" value="ECO:0000316"/>
    <property type="project" value="MGI"/>
</dbReference>
<dbReference type="GO" id="GO:0000122">
    <property type="term" value="P:negative regulation of transcription by RNA polymerase II"/>
    <property type="evidence" value="ECO:0000314"/>
    <property type="project" value="MGI"/>
</dbReference>
<dbReference type="GO" id="GO:0061351">
    <property type="term" value="P:neural precursor cell proliferation"/>
    <property type="evidence" value="ECO:0007669"/>
    <property type="project" value="Ensembl"/>
</dbReference>
<dbReference type="GO" id="GO:0022008">
    <property type="term" value="P:neurogenesis"/>
    <property type="evidence" value="ECO:0000315"/>
    <property type="project" value="MGI"/>
</dbReference>
<dbReference type="GO" id="GO:0003148">
    <property type="term" value="P:outflow tract septum morphogenesis"/>
    <property type="evidence" value="ECO:0000316"/>
    <property type="project" value="MGI"/>
</dbReference>
<dbReference type="GO" id="GO:0043065">
    <property type="term" value="P:positive regulation of apoptotic process"/>
    <property type="evidence" value="ECO:0000316"/>
    <property type="project" value="MGI"/>
</dbReference>
<dbReference type="GO" id="GO:0008284">
    <property type="term" value="P:positive regulation of cell population proliferation"/>
    <property type="evidence" value="ECO:0000316"/>
    <property type="project" value="MGI"/>
</dbReference>
<dbReference type="GO" id="GO:0043068">
    <property type="term" value="P:positive regulation of programmed cell death"/>
    <property type="evidence" value="ECO:0000316"/>
    <property type="project" value="MGI"/>
</dbReference>
<dbReference type="GO" id="GO:0045944">
    <property type="term" value="P:positive regulation of transcription by RNA polymerase II"/>
    <property type="evidence" value="ECO:0000314"/>
    <property type="project" value="MGI"/>
</dbReference>
<dbReference type="GO" id="GO:0012501">
    <property type="term" value="P:programmed cell death"/>
    <property type="evidence" value="ECO:0000316"/>
    <property type="project" value="MGI"/>
</dbReference>
<dbReference type="GO" id="GO:0031641">
    <property type="term" value="P:regulation of myelination"/>
    <property type="evidence" value="ECO:0007669"/>
    <property type="project" value="Ensembl"/>
</dbReference>
<dbReference type="GO" id="GO:0060041">
    <property type="term" value="P:retina development in camera-type eye"/>
    <property type="evidence" value="ECO:0000316"/>
    <property type="project" value="MGI"/>
</dbReference>
<dbReference type="GO" id="GO:0003406">
    <property type="term" value="P:retinal pigment epithelium development"/>
    <property type="evidence" value="ECO:0000316"/>
    <property type="project" value="MGI"/>
</dbReference>
<dbReference type="GO" id="GO:0048384">
    <property type="term" value="P:retinoic acid receptor signaling pathway"/>
    <property type="evidence" value="ECO:0007669"/>
    <property type="project" value="InterPro"/>
</dbReference>
<dbReference type="GO" id="GO:0072089">
    <property type="term" value="P:stem cell proliferation"/>
    <property type="evidence" value="ECO:0000316"/>
    <property type="project" value="MGI"/>
</dbReference>
<dbReference type="GO" id="GO:0021756">
    <property type="term" value="P:striatum development"/>
    <property type="evidence" value="ECO:0000315"/>
    <property type="project" value="MGI"/>
</dbReference>
<dbReference type="GO" id="GO:0001657">
    <property type="term" value="P:ureteric bud development"/>
    <property type="evidence" value="ECO:0000315"/>
    <property type="project" value="MGI"/>
</dbReference>
<dbReference type="GO" id="GO:0055012">
    <property type="term" value="P:ventricular cardiac muscle cell differentiation"/>
    <property type="evidence" value="ECO:0000315"/>
    <property type="project" value="MGI"/>
</dbReference>
<dbReference type="CDD" id="cd06964">
    <property type="entry name" value="NR_DBD_RAR"/>
    <property type="match status" value="1"/>
</dbReference>
<dbReference type="CDD" id="cd06937">
    <property type="entry name" value="NR_LBD_RAR"/>
    <property type="match status" value="1"/>
</dbReference>
<dbReference type="DisProt" id="DP02633"/>
<dbReference type="FunFam" id="1.10.565.10:FF:000073">
    <property type="entry name" value="Retinoic acid receptor beta"/>
    <property type="match status" value="1"/>
</dbReference>
<dbReference type="FunFam" id="3.30.50.10:FF:000004">
    <property type="entry name" value="Retinoic acid receptor beta isoform"/>
    <property type="match status" value="1"/>
</dbReference>
<dbReference type="Gene3D" id="3.30.50.10">
    <property type="entry name" value="Erythroid Transcription Factor GATA-1, subunit A"/>
    <property type="match status" value="1"/>
</dbReference>
<dbReference type="Gene3D" id="1.10.565.10">
    <property type="entry name" value="Retinoid X Receptor"/>
    <property type="match status" value="1"/>
</dbReference>
<dbReference type="InterPro" id="IPR035500">
    <property type="entry name" value="NHR-like_dom_sf"/>
</dbReference>
<dbReference type="InterPro" id="IPR047159">
    <property type="entry name" value="NR_DBD_RAR"/>
</dbReference>
<dbReference type="InterPro" id="IPR047158">
    <property type="entry name" value="NR_LBD_RAR"/>
</dbReference>
<dbReference type="InterPro" id="IPR000536">
    <property type="entry name" value="Nucl_hrmn_rcpt_lig-bd"/>
</dbReference>
<dbReference type="InterPro" id="IPR001723">
    <property type="entry name" value="Nuclear_hrmn_rcpt"/>
</dbReference>
<dbReference type="InterPro" id="IPR003078">
    <property type="entry name" value="Retinoic_acid_rcpt"/>
</dbReference>
<dbReference type="InterPro" id="IPR001628">
    <property type="entry name" value="Znf_hrmn_rcpt"/>
</dbReference>
<dbReference type="InterPro" id="IPR013088">
    <property type="entry name" value="Znf_NHR/GATA"/>
</dbReference>
<dbReference type="PANTHER" id="PTHR24085">
    <property type="entry name" value="NUCLEAR HORMONE RECEPTOR"/>
    <property type="match status" value="1"/>
</dbReference>
<dbReference type="PANTHER" id="PTHR24085:SF5">
    <property type="entry name" value="RETINOIC ACID RECEPTOR BETA"/>
    <property type="match status" value="1"/>
</dbReference>
<dbReference type="Pfam" id="PF00104">
    <property type="entry name" value="Hormone_recep"/>
    <property type="match status" value="1"/>
</dbReference>
<dbReference type="Pfam" id="PF00105">
    <property type="entry name" value="zf-C4"/>
    <property type="match status" value="1"/>
</dbReference>
<dbReference type="PRINTS" id="PR01292">
    <property type="entry name" value="RETNOICACIDR"/>
</dbReference>
<dbReference type="PRINTS" id="PR00398">
    <property type="entry name" value="STRDHORMONER"/>
</dbReference>
<dbReference type="PRINTS" id="PR00047">
    <property type="entry name" value="STROIDFINGER"/>
</dbReference>
<dbReference type="SMART" id="SM00430">
    <property type="entry name" value="HOLI"/>
    <property type="match status" value="1"/>
</dbReference>
<dbReference type="SMART" id="SM00399">
    <property type="entry name" value="ZnF_C4"/>
    <property type="match status" value="1"/>
</dbReference>
<dbReference type="SUPFAM" id="SSF57716">
    <property type="entry name" value="Glucocorticoid receptor-like (DNA-binding domain)"/>
    <property type="match status" value="1"/>
</dbReference>
<dbReference type="SUPFAM" id="SSF48508">
    <property type="entry name" value="Nuclear receptor ligand-binding domain"/>
    <property type="match status" value="1"/>
</dbReference>
<dbReference type="PROSITE" id="PS51843">
    <property type="entry name" value="NR_LBD"/>
    <property type="match status" value="1"/>
</dbReference>
<dbReference type="PROSITE" id="PS00031">
    <property type="entry name" value="NUCLEAR_REC_DBD_1"/>
    <property type="match status" value="1"/>
</dbReference>
<dbReference type="PROSITE" id="PS51030">
    <property type="entry name" value="NUCLEAR_REC_DBD_2"/>
    <property type="match status" value="1"/>
</dbReference>
<comment type="function">
    <text evidence="1 6">Receptor for retinoic acid. Retinoic acid receptors bind as heterodimers to their target response elements in response to their ligands, all-trans or 9-cis retinoic acid, and regulate gene expression in various biological processes. The RAR/RXR heterodimers bind to the retinoic acid response elements (RARE) composed of tandem 5'-AGGTCA-3' sites known as DR1-DR5. In the absence of ligand, acts mainly as an activator of gene expression due to weak binding to corepressors (By similarity). The RXRA/RARB heterodimer can act as a repressor on the DR1 element and as an activator on the DR5 element (By similarity). In concert with RARG, required for skeletal growth, matrix homeostasis and growth plate function (PubMed:19389355).</text>
</comment>
<comment type="subunit">
    <text evidence="1 2">Homodimer (By similarity). Heterodimer; with a RXR molecule (By similarity). Binds DNA preferentially as a RAR/RXR heterodimer (By similarity). Heterodimerizes (via NR LBD) with RXRA (By similarity). Interacts weakly with NCOR2 (By similarity).</text>
</comment>
<comment type="interaction">
    <interactant intactId="EBI-2903247">
        <id>P22605</id>
    </interactant>
    <interactant intactId="EBI-645598">
        <id>Q8C0D7</id>
        <label>Ing4</label>
    </interactant>
    <organismsDiffer>false</organismsDiffer>
    <experiments>3</experiments>
</comment>
<comment type="subcellular location">
    <subcellularLocation>
        <location evidence="1">Nucleus</location>
    </subcellularLocation>
    <subcellularLocation>
        <location evidence="1">Cytoplasm</location>
    </subcellularLocation>
</comment>
<comment type="alternative products">
    <event type="alternative splicing"/>
    <isoform>
        <id>P22605-1</id>
        <name>Beta-3</name>
        <sequence type="displayed"/>
    </isoform>
    <isoform>
        <id>P22605-2</id>
        <name>Beta-1</name>
        <sequence type="described" ref="VSP_003639 VSP_003640"/>
    </isoform>
    <isoform>
        <id>P22605-3</id>
        <name>Beta-2</name>
        <sequence type="described" ref="VSP_003636"/>
    </isoform>
    <isoform>
        <id>P22605-4</id>
        <name>Beta-4</name>
        <sequence type="described" ref="VSP_003637 VSP_003638"/>
    </isoform>
</comment>
<comment type="domain">
    <text>Composed of three domains: a modulating N-terminal domain, a DNA-binding domain and a C-terminal ligand-binding domain.</text>
</comment>
<comment type="domain">
    <text evidence="1">The DNA-binding nuclear receptor domain and the NR LBD domain are required for binding of the RARB/RXRA heterodimer to both DR1 and DR5 DNA elements.</text>
</comment>
<comment type="disruption phenotype">
    <text evidence="6">Rarb and Rarg, but not Rarb and Rara, double null mice exhibit growth retardation 3 weeks after birth. Defects are found in the growth plates with deficiency in cartilage. Growth retardation was noticable in limb sketal elements such as femurs. Early lethality and male sterility due to squamous metaplasia of the seminal vesicles and prostate are also observed. Isoform 2 mutants appear normal.</text>
</comment>
<comment type="similarity">
    <text evidence="12">Belongs to the nuclear hormone receptor family. NR1 subfamily.</text>
</comment>
<evidence type="ECO:0000250" key="1">
    <source>
        <dbReference type="UniProtKB" id="P10826"/>
    </source>
</evidence>
<evidence type="ECO:0000250" key="2">
    <source>
        <dbReference type="UniProtKB" id="P28702"/>
    </source>
</evidence>
<evidence type="ECO:0000255" key="3">
    <source>
        <dbReference type="PROSITE-ProRule" id="PRU00407"/>
    </source>
</evidence>
<evidence type="ECO:0000255" key="4">
    <source>
        <dbReference type="PROSITE-ProRule" id="PRU01189"/>
    </source>
</evidence>
<evidence type="ECO:0000256" key="5">
    <source>
        <dbReference type="SAM" id="MobiDB-lite"/>
    </source>
</evidence>
<evidence type="ECO:0000269" key="6">
    <source>
    </source>
</evidence>
<evidence type="ECO:0000303" key="7">
    <source>
    </source>
</evidence>
<evidence type="ECO:0000303" key="8">
    <source>
    </source>
</evidence>
<evidence type="ECO:0000303" key="9">
    <source>
    </source>
</evidence>
<evidence type="ECO:0000303" key="10">
    <source>
    </source>
</evidence>
<evidence type="ECO:0000303" key="11">
    <source>
    </source>
</evidence>
<evidence type="ECO:0000305" key="12"/>
<evidence type="ECO:0007829" key="13">
    <source>
        <dbReference type="PDB" id="1XDK"/>
    </source>
</evidence>
<reference key="1">
    <citation type="journal article" date="1991" name="EMBO J.">
        <title>Differentially expressed isoforms of the mouse retinoic acid receptor beta generated by usage of two promoters and alternative splicing.</title>
        <authorList>
            <person name="Zelent A."/>
            <person name="Mendelsohn C."/>
            <person name="Kastner P."/>
            <person name="Krust A."/>
            <person name="Garnier J.-M."/>
            <person name="Ruffenach F."/>
            <person name="Leroy P."/>
            <person name="Chambon P."/>
        </authorList>
    </citation>
    <scope>NUCLEOTIDE SEQUENCE [MRNA] (ISOFORMS BETA-1; BETA-2 AND BETA-3)</scope>
    <source>
        <strain>C57BL/C</strain>
    </source>
</reference>
<reference key="2">
    <citation type="journal article" date="1989" name="Nature">
        <title>Cloning of murine alpha and beta retinoic acid receptors and a novel receptor gamma predominantly expressed in skin.</title>
        <authorList>
            <person name="Zelent A."/>
            <person name="Krust A."/>
            <person name="Petkovich M."/>
            <person name="Kastner P."/>
            <person name="Chambon P."/>
        </authorList>
    </citation>
    <scope>NUCLEOTIDE SEQUENCE [MRNA] (ISOFORM BETA-2)</scope>
</reference>
<reference key="3">
    <citation type="journal article" date="1993" name="J. Recept. Res.">
        <title>Cloning of several genes coding for retinoic acid nuclear receptors in the mouse embryonal carcinoma cell line PCC7-MZ1.</title>
        <authorList>
            <person name="Heiermann R."/>
            <person name="Rentrop M."/>
            <person name="Lang E."/>
            <person name="Maelicke A."/>
        </authorList>
    </citation>
    <scope>NUCLEOTIDE SEQUENCE [MRNA] (ISOFORM BETA-2)</scope>
</reference>
<reference key="4">
    <citation type="journal article" date="1992" name="Proc. Natl. Acad. Sci. U.S.A.">
        <title>RAR-beta 4, a retinoic acid receptor isoform is generated from RAR-beta 2 by alternative splicing and usage of a CUG initiator codon.</title>
        <authorList>
            <person name="Nagpal S."/>
            <person name="Zelent A."/>
            <person name="Chambon P."/>
        </authorList>
    </citation>
    <scope>NUCLEOTIDE SEQUENCE [MRNA] (ISOFORM BETA-4)</scope>
</reference>
<reference key="5">
    <citation type="journal article" date="1991" name="DNA Seq.">
        <title>Mouse and human retinoic acid receptor beta 2 promoters: sequence comparison and localization of retinoic acid responsiveness.</title>
        <authorList>
            <person name="Shen S."/>
            <person name="Kruyt F.A."/>
            <person name="den Hertog J."/>
            <person name="van der Saag P.T."/>
            <person name="Kruijer W."/>
        </authorList>
    </citation>
    <scope>NUCLEOTIDE SEQUENCE [MRNA] OF 1-48 (ISOFORM BETA-2)</scope>
</reference>
<reference key="6">
    <citation type="journal article" date="2009" name="Dev. Biol.">
        <title>Retinoic acid receptors are required for skeletal growth, matrix homeostasis and growth plate function in postnatal mouse.</title>
        <authorList>
            <person name="Williams J.A."/>
            <person name="Kondo N."/>
            <person name="Okabe T."/>
            <person name="Takeshita N."/>
            <person name="Pilchak D.M."/>
            <person name="Koyama E."/>
            <person name="Ochiai T."/>
            <person name="Jensen D."/>
            <person name="Chu M.L."/>
            <person name="Kane M.A."/>
            <person name="Napoli J.L."/>
            <person name="Enomoto-Iwamoto M."/>
            <person name="Ghyselinck N."/>
            <person name="Chambon P."/>
            <person name="Pacifici M."/>
            <person name="Iwamoto M."/>
        </authorList>
    </citation>
    <scope>FUNCTION</scope>
    <scope>DISRUPTION PHENOTYPE</scope>
</reference>
<reference key="7">
    <citation type="journal article" date="2005" name="J. Biol. Chem.">
        <title>Characterization of the interaction between retinoic acid receptor/retinoid X receptor (RAR/RXR) heterodimers and transcriptional coactivators through structural and fluorescence anisotropy studies.</title>
        <authorList>
            <person name="Pogenberg V."/>
            <person name="Guichou J.F."/>
            <person name="Vivat-Hannah V."/>
            <person name="Kammerer S."/>
            <person name="Perez E."/>
            <person name="Germain P."/>
            <person name="de Lera A.R."/>
            <person name="Gronemeyer H."/>
            <person name="Royer C.A."/>
            <person name="Bourguet W."/>
        </authorList>
    </citation>
    <scope>X-RAY CRYSTALLOGRAPHY (2.9 ANGSTROMS) OF 180-482 IN COMPLEX WITH RXRA AND MED1</scope>
</reference>